<comment type="function">
    <text evidence="1">Catalyzes the NADPH-dependent reduction of glutamyl-tRNA(Glu) to glutamate 1-semialdehyde (GSA).</text>
</comment>
<comment type="catalytic activity">
    <reaction evidence="1">
        <text>(S)-4-amino-5-oxopentanoate + tRNA(Glu) + NADP(+) = L-glutamyl-tRNA(Glu) + NADPH + H(+)</text>
        <dbReference type="Rhea" id="RHEA:12344"/>
        <dbReference type="Rhea" id="RHEA-COMP:9663"/>
        <dbReference type="Rhea" id="RHEA-COMP:9680"/>
        <dbReference type="ChEBI" id="CHEBI:15378"/>
        <dbReference type="ChEBI" id="CHEBI:57501"/>
        <dbReference type="ChEBI" id="CHEBI:57783"/>
        <dbReference type="ChEBI" id="CHEBI:58349"/>
        <dbReference type="ChEBI" id="CHEBI:78442"/>
        <dbReference type="ChEBI" id="CHEBI:78520"/>
        <dbReference type="EC" id="1.2.1.70"/>
    </reaction>
</comment>
<comment type="pathway">
    <text evidence="1">Porphyrin-containing compound metabolism; protoporphyrin-IX biosynthesis; 5-aminolevulinate from L-glutamyl-tRNA(Glu): step 1/2.</text>
</comment>
<comment type="pathway">
    <text evidence="1">Porphyrin-containing compound metabolism; chlorophyll biosynthesis.</text>
</comment>
<comment type="subunit">
    <text evidence="1">Homodimer.</text>
</comment>
<comment type="domain">
    <text evidence="1">Possesses an unusual extended V-shaped dimeric structure with each monomer consisting of three distinct domains arranged along a curved 'spinal' alpha-helix. The N-terminal catalytic domain specifically recognizes the glutamate moiety of the substrate. The second domain is the NADPH-binding domain, and the third C-terminal domain is responsible for dimerization.</text>
</comment>
<comment type="miscellaneous">
    <text evidence="1">During catalysis, the active site Cys acts as a nucleophile attacking the alpha-carbonyl group of tRNA-bound glutamate with the formation of a thioester intermediate between enzyme and glutamate, and the concomitant release of tRNA(Glu). The thioester intermediate is finally reduced by direct hydride transfer from NADPH, to form the product GSA.</text>
</comment>
<comment type="similarity">
    <text evidence="1">Belongs to the glutamyl-tRNA reductase family.</text>
</comment>
<sequence>MFIAVVGLSHRTAPVEIRERLSIPEAEVGERIQQLRAHPHIEEAAILSTCNRLEVYIVTPEMESGVRQTMQFLAEAKGIPLPQLRPHLFTLLYQDAVTHLMRVAAGLDSLVLGEGQILSQVKKAQQLGQACNGMDRILNRLFKAAITAGKRIRTETGIGTGAMSISSAAVELALQEQGSLSQGKVTVVGAGKMARLLVQHLLAKGAVDITVVNRSLERAEALAKQFEQPIQVLPWESLLSSIAESNLVFTSTGATQPILTYEQLAGVLQPDQPLLLVDISVPRNIDPGVEKLRGVQVFNVDHLSRIVEENRAQRQKLALAAEALVEEEVEQFMEWWRSLETVPTISSLRHKVESIREQEMEKALSRLGKDFAEKHLEVIEALTRGIVNKILHDPMVQLRAQRDIEARRRAMQILQELFNLDPMPFQAQQER</sequence>
<proteinExistence type="inferred from homology"/>
<dbReference type="EC" id="1.2.1.70" evidence="1"/>
<dbReference type="EMBL" id="CP000239">
    <property type="protein sequence ID" value="ABC98760.1"/>
    <property type="molecule type" value="Genomic_DNA"/>
</dbReference>
<dbReference type="RefSeq" id="WP_011429447.1">
    <property type="nucleotide sequence ID" value="NC_007775.1"/>
</dbReference>
<dbReference type="SMR" id="Q2JWU6"/>
<dbReference type="STRING" id="321327.CYA_0543"/>
<dbReference type="KEGG" id="cya:CYA_0543"/>
<dbReference type="eggNOG" id="COG0373">
    <property type="taxonomic scope" value="Bacteria"/>
</dbReference>
<dbReference type="HOGENOM" id="CLU_035113_2_1_3"/>
<dbReference type="OrthoDB" id="110209at2"/>
<dbReference type="UniPathway" id="UPA00251">
    <property type="reaction ID" value="UER00316"/>
</dbReference>
<dbReference type="UniPathway" id="UPA00668"/>
<dbReference type="Proteomes" id="UP000008818">
    <property type="component" value="Chromosome"/>
</dbReference>
<dbReference type="GO" id="GO:0008883">
    <property type="term" value="F:glutamyl-tRNA reductase activity"/>
    <property type="evidence" value="ECO:0007669"/>
    <property type="project" value="UniProtKB-UniRule"/>
</dbReference>
<dbReference type="GO" id="GO:0050661">
    <property type="term" value="F:NADP binding"/>
    <property type="evidence" value="ECO:0007669"/>
    <property type="project" value="InterPro"/>
</dbReference>
<dbReference type="GO" id="GO:0015995">
    <property type="term" value="P:chlorophyll biosynthetic process"/>
    <property type="evidence" value="ECO:0007669"/>
    <property type="project" value="UniProtKB-UniRule"/>
</dbReference>
<dbReference type="GO" id="GO:0006782">
    <property type="term" value="P:protoporphyrinogen IX biosynthetic process"/>
    <property type="evidence" value="ECO:0007669"/>
    <property type="project" value="UniProtKB-UniRule"/>
</dbReference>
<dbReference type="CDD" id="cd05213">
    <property type="entry name" value="NAD_bind_Glutamyl_tRNA_reduct"/>
    <property type="match status" value="1"/>
</dbReference>
<dbReference type="FunFam" id="3.30.460.30:FF:000001">
    <property type="entry name" value="Glutamyl-tRNA reductase"/>
    <property type="match status" value="1"/>
</dbReference>
<dbReference type="FunFam" id="3.40.50.720:FF:000031">
    <property type="entry name" value="Glutamyl-tRNA reductase"/>
    <property type="match status" value="1"/>
</dbReference>
<dbReference type="Gene3D" id="3.30.460.30">
    <property type="entry name" value="Glutamyl-tRNA reductase, N-terminal domain"/>
    <property type="match status" value="1"/>
</dbReference>
<dbReference type="Gene3D" id="3.40.50.720">
    <property type="entry name" value="NAD(P)-binding Rossmann-like Domain"/>
    <property type="match status" value="1"/>
</dbReference>
<dbReference type="HAMAP" id="MF_00087">
    <property type="entry name" value="Glu_tRNA_reductase"/>
    <property type="match status" value="1"/>
</dbReference>
<dbReference type="InterPro" id="IPR000343">
    <property type="entry name" value="4pyrrol_synth_GluRdtase"/>
</dbReference>
<dbReference type="InterPro" id="IPR015896">
    <property type="entry name" value="4pyrrol_synth_GluRdtase_dimer"/>
</dbReference>
<dbReference type="InterPro" id="IPR015895">
    <property type="entry name" value="4pyrrol_synth_GluRdtase_N"/>
</dbReference>
<dbReference type="InterPro" id="IPR018214">
    <property type="entry name" value="GluRdtase_CS"/>
</dbReference>
<dbReference type="InterPro" id="IPR036453">
    <property type="entry name" value="GluRdtase_dimer_dom_sf"/>
</dbReference>
<dbReference type="InterPro" id="IPR036343">
    <property type="entry name" value="GluRdtase_N_sf"/>
</dbReference>
<dbReference type="InterPro" id="IPR036291">
    <property type="entry name" value="NAD(P)-bd_dom_sf"/>
</dbReference>
<dbReference type="InterPro" id="IPR006151">
    <property type="entry name" value="Shikm_DH/Glu-tRNA_Rdtase"/>
</dbReference>
<dbReference type="NCBIfam" id="TIGR01035">
    <property type="entry name" value="hemA"/>
    <property type="match status" value="1"/>
</dbReference>
<dbReference type="NCBIfam" id="NF000744">
    <property type="entry name" value="PRK00045.1-3"/>
    <property type="match status" value="1"/>
</dbReference>
<dbReference type="PANTHER" id="PTHR43120">
    <property type="entry name" value="GLUTAMYL-TRNA REDUCTASE 1, CHLOROPLASTIC"/>
    <property type="match status" value="1"/>
</dbReference>
<dbReference type="PANTHER" id="PTHR43120:SF1">
    <property type="entry name" value="GLUTAMYL-TRNA REDUCTASE 1, CHLOROPLASTIC"/>
    <property type="match status" value="1"/>
</dbReference>
<dbReference type="Pfam" id="PF00745">
    <property type="entry name" value="GlutR_dimer"/>
    <property type="match status" value="1"/>
</dbReference>
<dbReference type="Pfam" id="PF05201">
    <property type="entry name" value="GlutR_N"/>
    <property type="match status" value="1"/>
</dbReference>
<dbReference type="Pfam" id="PF01488">
    <property type="entry name" value="Shikimate_DH"/>
    <property type="match status" value="1"/>
</dbReference>
<dbReference type="PIRSF" id="PIRSF000445">
    <property type="entry name" value="4pyrrol_synth_GluRdtase"/>
    <property type="match status" value="1"/>
</dbReference>
<dbReference type="SUPFAM" id="SSF69742">
    <property type="entry name" value="Glutamyl tRNA-reductase catalytic, N-terminal domain"/>
    <property type="match status" value="1"/>
</dbReference>
<dbReference type="SUPFAM" id="SSF69075">
    <property type="entry name" value="Glutamyl tRNA-reductase dimerization domain"/>
    <property type="match status" value="1"/>
</dbReference>
<dbReference type="SUPFAM" id="SSF51735">
    <property type="entry name" value="NAD(P)-binding Rossmann-fold domains"/>
    <property type="match status" value="1"/>
</dbReference>
<dbReference type="PROSITE" id="PS00747">
    <property type="entry name" value="GLUTR"/>
    <property type="match status" value="1"/>
</dbReference>
<accession>Q2JWU6</accession>
<feature type="chain" id="PRO_1000004707" description="Glutamyl-tRNA reductase">
    <location>
        <begin position="1"/>
        <end position="431"/>
    </location>
</feature>
<feature type="active site" description="Nucleophile" evidence="1">
    <location>
        <position position="50"/>
    </location>
</feature>
<feature type="binding site" evidence="1">
    <location>
        <begin position="49"/>
        <end position="52"/>
    </location>
    <ligand>
        <name>substrate</name>
    </ligand>
</feature>
<feature type="binding site" evidence="1">
    <location>
        <position position="109"/>
    </location>
    <ligand>
        <name>substrate</name>
    </ligand>
</feature>
<feature type="binding site" evidence="1">
    <location>
        <begin position="114"/>
        <end position="116"/>
    </location>
    <ligand>
        <name>substrate</name>
    </ligand>
</feature>
<feature type="binding site" evidence="1">
    <location>
        <position position="120"/>
    </location>
    <ligand>
        <name>substrate</name>
    </ligand>
</feature>
<feature type="binding site" evidence="1">
    <location>
        <begin position="189"/>
        <end position="194"/>
    </location>
    <ligand>
        <name>NADP(+)</name>
        <dbReference type="ChEBI" id="CHEBI:58349"/>
    </ligand>
</feature>
<feature type="site" description="Important for activity" evidence="1">
    <location>
        <position position="99"/>
    </location>
</feature>
<protein>
    <recommendedName>
        <fullName evidence="1">Glutamyl-tRNA reductase</fullName>
        <shortName evidence="1">GluTR</shortName>
        <ecNumber evidence="1">1.2.1.70</ecNumber>
    </recommendedName>
</protein>
<keyword id="KW-0149">Chlorophyll biosynthesis</keyword>
<keyword id="KW-0521">NADP</keyword>
<keyword id="KW-0560">Oxidoreductase</keyword>
<keyword id="KW-0627">Porphyrin biosynthesis</keyword>
<organism>
    <name type="scientific">Synechococcus sp. (strain JA-3-3Ab)</name>
    <name type="common">Cyanobacteria bacterium Yellowstone A-Prime</name>
    <dbReference type="NCBI Taxonomy" id="321327"/>
    <lineage>
        <taxon>Bacteria</taxon>
        <taxon>Bacillati</taxon>
        <taxon>Cyanobacteriota</taxon>
        <taxon>Cyanophyceae</taxon>
        <taxon>Synechococcales</taxon>
        <taxon>Synechococcaceae</taxon>
        <taxon>Synechococcus</taxon>
    </lineage>
</organism>
<name>HEM1_SYNJA</name>
<gene>
    <name evidence="1" type="primary">hemA</name>
    <name type="ordered locus">CYA_0543</name>
</gene>
<evidence type="ECO:0000255" key="1">
    <source>
        <dbReference type="HAMAP-Rule" id="MF_00087"/>
    </source>
</evidence>
<reference key="1">
    <citation type="journal article" date="2007" name="ISME J.">
        <title>Population level functional diversity in a microbial community revealed by comparative genomic and metagenomic analyses.</title>
        <authorList>
            <person name="Bhaya D."/>
            <person name="Grossman A.R."/>
            <person name="Steunou A.-S."/>
            <person name="Khuri N."/>
            <person name="Cohan F.M."/>
            <person name="Hamamura N."/>
            <person name="Melendrez M.C."/>
            <person name="Bateson M.M."/>
            <person name="Ward D.M."/>
            <person name="Heidelberg J.F."/>
        </authorList>
    </citation>
    <scope>NUCLEOTIDE SEQUENCE [LARGE SCALE GENOMIC DNA]</scope>
    <source>
        <strain>JA-3-3Ab</strain>
    </source>
</reference>